<keyword id="KW-0012">Acyltransferase</keyword>
<keyword id="KW-0808">Transferase</keyword>
<sequence>MALVNHRENVKGRAQILAIGTANPKNCFRQVDYPDYYFRVTKSDHLIDLKAKFKRMCEKSMIEKRYMHVNEEILEQNPSMNHGGEKMVSSLDVRLDMEIMEIPKLAAEAATKAMDEWGQPKSRITHLVFHSTLGTVMPGVDYELIKLLGLNPSVKRFMLYHLGCYGGGTVLRLAKDLAENNPGSRVLVLCCEMMPSGFHGPPSLQHAHLDILTGHAIFGDGAGAVIVGCVDPSGGTNGVVERGVRRYEQPLFEIHSAYQTVLPDSKDAVGGRLREAGLIYYLSKRLSNDVSGKIDECCLAEAFSAAIKDNFEDWNSLFWIVHPAGRPILDKLDAKLGLNKEKLRASRNVLRDYGNMWSSSVLFVLDEMRKGSIAQRKTTTGEGFEWGVLLGFGPGVTVETVVLRSVPTAKLK</sequence>
<accession>A0A2Z5QKZ7</accession>
<proteinExistence type="evidence at protein level"/>
<reference key="1">
    <citation type="journal article" date="2016" name="Front. Plant Sci.">
        <title>A novel class of plant type III polyketide synthase involved in orsellinic acid biosynthesis from Rhododendron dauricum.</title>
        <authorList>
            <person name="Taura F."/>
            <person name="Iijima M."/>
            <person name="Yamanaka E."/>
            <person name="Takahashi H."/>
            <person name="Kenmoku H."/>
            <person name="Saeki H."/>
            <person name="Morimoto S."/>
            <person name="Asakawa Y."/>
            <person name="Kurosaki F."/>
            <person name="Morita H."/>
        </authorList>
    </citation>
    <scope>NUCLEOTIDE SEQUENCE [MRNA]</scope>
    <scope>FUNCTION</scope>
    <scope>CATALYTIC ACTIVITY</scope>
    <scope>PATHWAY</scope>
    <scope>ACTIVE SITES</scope>
    <scope>SUBUNIT</scope>
    <scope>BIOPHYSICOCHEMICAL PROPERTIES</scope>
    <scope>TISSUE SPECIFICITY</scope>
    <source>
        <tissue>Leaf</tissue>
    </source>
</reference>
<protein>
    <recommendedName>
        <fullName evidence="3">Orcinol synthase</fullName>
        <shortName evidence="3">RdORS</shortName>
        <ecNumber evidence="2">2.3.1.-</ecNumber>
    </recommendedName>
</protein>
<dbReference type="EC" id="2.3.1.-" evidence="2"/>
<dbReference type="EMBL" id="LC133082">
    <property type="protein sequence ID" value="BAV83003.1"/>
    <property type="molecule type" value="mRNA"/>
</dbReference>
<dbReference type="SMR" id="A0A2Z5QKZ7"/>
<dbReference type="UniPathway" id="UPA00213"/>
<dbReference type="GO" id="GO:0016747">
    <property type="term" value="F:acyltransferase activity, transferring groups other than amino-acyl groups"/>
    <property type="evidence" value="ECO:0007669"/>
    <property type="project" value="InterPro"/>
</dbReference>
<dbReference type="GO" id="GO:0042802">
    <property type="term" value="F:identical protein binding"/>
    <property type="evidence" value="ECO:0000314"/>
    <property type="project" value="UniProtKB"/>
</dbReference>
<dbReference type="GO" id="GO:0042803">
    <property type="term" value="F:protein homodimerization activity"/>
    <property type="evidence" value="ECO:0000314"/>
    <property type="project" value="UniProtKB"/>
</dbReference>
<dbReference type="GO" id="GO:0046197">
    <property type="term" value="P:orcinol biosynthetic process"/>
    <property type="evidence" value="ECO:0000314"/>
    <property type="project" value="UniProtKB"/>
</dbReference>
<dbReference type="GO" id="GO:0030639">
    <property type="term" value="P:polyketide biosynthetic process"/>
    <property type="evidence" value="ECO:0007669"/>
    <property type="project" value="TreeGrafter"/>
</dbReference>
<dbReference type="GO" id="GO:0016114">
    <property type="term" value="P:terpenoid biosynthetic process"/>
    <property type="evidence" value="ECO:0007669"/>
    <property type="project" value="UniProtKB-UniPathway"/>
</dbReference>
<dbReference type="CDD" id="cd00831">
    <property type="entry name" value="CHS_like"/>
    <property type="match status" value="1"/>
</dbReference>
<dbReference type="FunFam" id="3.40.47.10:FF:000014">
    <property type="entry name" value="Chalcone synthase 1"/>
    <property type="match status" value="1"/>
</dbReference>
<dbReference type="FunFam" id="3.40.47.10:FF:000025">
    <property type="entry name" value="Chalcone synthase 2"/>
    <property type="match status" value="1"/>
</dbReference>
<dbReference type="Gene3D" id="3.40.47.10">
    <property type="match status" value="2"/>
</dbReference>
<dbReference type="InterPro" id="IPR012328">
    <property type="entry name" value="Chalcone/stilbene_synt_C"/>
</dbReference>
<dbReference type="InterPro" id="IPR001099">
    <property type="entry name" value="Chalcone/stilbene_synt_N"/>
</dbReference>
<dbReference type="InterPro" id="IPR018088">
    <property type="entry name" value="Chalcone/stilbene_synthase_AS"/>
</dbReference>
<dbReference type="InterPro" id="IPR011141">
    <property type="entry name" value="Polyketide_synthase_type-III"/>
</dbReference>
<dbReference type="InterPro" id="IPR016039">
    <property type="entry name" value="Thiolase-like"/>
</dbReference>
<dbReference type="PANTHER" id="PTHR11877:SF14">
    <property type="entry name" value="CHALCONE SYNTHASE"/>
    <property type="match status" value="1"/>
</dbReference>
<dbReference type="PANTHER" id="PTHR11877">
    <property type="entry name" value="HYDROXYMETHYLGLUTARYL-COA SYNTHASE"/>
    <property type="match status" value="1"/>
</dbReference>
<dbReference type="Pfam" id="PF02797">
    <property type="entry name" value="Chal_sti_synt_C"/>
    <property type="match status" value="1"/>
</dbReference>
<dbReference type="Pfam" id="PF00195">
    <property type="entry name" value="Chal_sti_synt_N"/>
    <property type="match status" value="1"/>
</dbReference>
<dbReference type="PIRSF" id="PIRSF000451">
    <property type="entry name" value="PKS_III"/>
    <property type="match status" value="1"/>
</dbReference>
<dbReference type="SUPFAM" id="SSF53901">
    <property type="entry name" value="Thiolase-like"/>
    <property type="match status" value="2"/>
</dbReference>
<dbReference type="PROSITE" id="PS00441">
    <property type="entry name" value="CHALCONE_SYNTH"/>
    <property type="match status" value="1"/>
</dbReference>
<evidence type="ECO:0000255" key="1">
    <source>
        <dbReference type="PROSITE-ProRule" id="PRU10023"/>
    </source>
</evidence>
<evidence type="ECO:0000269" key="2">
    <source>
    </source>
</evidence>
<evidence type="ECO:0000303" key="3">
    <source>
    </source>
</evidence>
<evidence type="ECO:0000305" key="4"/>
<comment type="function">
    <text evidence="2">Involved in the biosynthesis of acetate-derived aromatic tetraketides natural products, precursors of daurichromenic acid, an anti-human immunodeficiency viruses (HIV) meroterpenoid consisting of sesquiterpene and orsellinic acid (OSA) moieties (PubMed:27729920). Accepts acetyl-CoA as starter substrate and produces orcinol as the major reaction product, along with four minor products including OSA, tetraacetate lactone, triacetate lactone and 2-acetylphloroglucinol (PubMed:27729920).</text>
</comment>
<comment type="catalytic activity">
    <reaction evidence="2">
        <text>3 malonyl-CoA + acetyl-CoA + 3 H(+) = orcinol + 4 CO2 + 4 CoA</text>
        <dbReference type="Rhea" id="RHEA:63072"/>
        <dbReference type="ChEBI" id="CHEBI:15378"/>
        <dbReference type="ChEBI" id="CHEBI:16526"/>
        <dbReference type="ChEBI" id="CHEBI:16536"/>
        <dbReference type="ChEBI" id="CHEBI:57287"/>
        <dbReference type="ChEBI" id="CHEBI:57288"/>
        <dbReference type="ChEBI" id="CHEBI:57384"/>
    </reaction>
    <physiologicalReaction direction="left-to-right" evidence="2">
        <dbReference type="Rhea" id="RHEA:63073"/>
    </physiologicalReaction>
</comment>
<comment type="catalytic activity">
    <reaction evidence="2">
        <text>3 malonyl-CoA + acetyl-CoA + 2 H(+) = orsellinate + 3 CO2 + 4 CoA</text>
        <dbReference type="Rhea" id="RHEA:62972"/>
        <dbReference type="ChEBI" id="CHEBI:15378"/>
        <dbReference type="ChEBI" id="CHEBI:16162"/>
        <dbReference type="ChEBI" id="CHEBI:16526"/>
        <dbReference type="ChEBI" id="CHEBI:57287"/>
        <dbReference type="ChEBI" id="CHEBI:57288"/>
        <dbReference type="ChEBI" id="CHEBI:57384"/>
    </reaction>
    <physiologicalReaction direction="left-to-right" evidence="2">
        <dbReference type="Rhea" id="RHEA:62973"/>
    </physiologicalReaction>
</comment>
<comment type="catalytic activity">
    <reaction evidence="2">
        <text>3 malonyl-CoA + acetyl-CoA + 3 H(+) = tetraacetate lactone + 3 CO2 + 4 CoA</text>
        <dbReference type="Rhea" id="RHEA:63064"/>
        <dbReference type="ChEBI" id="CHEBI:15378"/>
        <dbReference type="ChEBI" id="CHEBI:16526"/>
        <dbReference type="ChEBI" id="CHEBI:57287"/>
        <dbReference type="ChEBI" id="CHEBI:57288"/>
        <dbReference type="ChEBI" id="CHEBI:57384"/>
        <dbReference type="ChEBI" id="CHEBI:133952"/>
    </reaction>
    <physiologicalReaction direction="left-to-right" evidence="2">
        <dbReference type="Rhea" id="RHEA:63065"/>
    </physiologicalReaction>
</comment>
<comment type="catalytic activity">
    <reaction evidence="2">
        <text>2 malonyl-CoA + acetyl-CoA + 2 H(+) = triacetate lactone + 2 CO2 + 3 CoA</text>
        <dbReference type="Rhea" id="RHEA:63068"/>
        <dbReference type="ChEBI" id="CHEBI:15378"/>
        <dbReference type="ChEBI" id="CHEBI:16458"/>
        <dbReference type="ChEBI" id="CHEBI:16526"/>
        <dbReference type="ChEBI" id="CHEBI:57287"/>
        <dbReference type="ChEBI" id="CHEBI:57288"/>
        <dbReference type="ChEBI" id="CHEBI:57384"/>
    </reaction>
    <physiologicalReaction direction="left-to-right" evidence="2">
        <dbReference type="Rhea" id="RHEA:63069"/>
    </physiologicalReaction>
</comment>
<comment type="catalytic activity">
    <reaction evidence="2">
        <text>3 malonyl-CoA + acetyl-CoA + 3 H(+) = 2-acetylphloroglucinol + 3 CO2 + 4 CoA</text>
        <dbReference type="Rhea" id="RHEA:63076"/>
        <dbReference type="ChEBI" id="CHEBI:15378"/>
        <dbReference type="ChEBI" id="CHEBI:16526"/>
        <dbReference type="ChEBI" id="CHEBI:57287"/>
        <dbReference type="ChEBI" id="CHEBI:57288"/>
        <dbReference type="ChEBI" id="CHEBI:57384"/>
        <dbReference type="ChEBI" id="CHEBI:64344"/>
    </reaction>
    <physiologicalReaction direction="left-to-right" evidence="2">
        <dbReference type="Rhea" id="RHEA:63077"/>
    </physiologicalReaction>
</comment>
<comment type="biophysicochemical properties">
    <kinetics>
        <KM evidence="2">10.6 uM for tetraacetic acid lactone (with acetyl-CoA as cosubstrate)</KM>
        <KM evidence="2">11.7 uM for triacetic acid lactone (with acetyl-CoA as cosubstrate)</KM>
        <KM evidence="2">9.98 uM for orcinol (with acetyl-CoA as cosubstrate)</KM>
        <KM evidence="2">9.88 uM for orsellinic acid (with acetyl-CoA as cosubstrate)</KM>
        <KM evidence="2">10.8 uM for phloroacetophenone (with acetyl-CoA as cosubstrate)</KM>
        <KM evidence="2">17.1 uM for 4-hydroxy-6-propyl-2-pyrone (with butyryl-CoA as cosubstrate)</KM>
        <KM evidence="2">26.4 uM for 4-hydroxy-6-pentyl-2-pyrone (with hexanoyl-CoA as cosubstrate)</KM>
        <text evidence="2">kcat is 0.0573 min(-1) with tetraacetic acid lactone as substrate (with acetyl-CoA as cosubstrate) (PubMed:27729920). kcat is 0.243 min(-1) with triacetic acid lactone as substrate (with acetyl-CoA as cosubstrate) (PubMed:27729920). kcat is 1.46 min(-1) with orcinol as substrate (with acetyl-CoA as cosubstrate) (PubMed:27729920). kcat is 0.0675 min(-1) with orsellinic acid as substrate (with acetyl-CoA as cosubstrate) (PubMed:27729920). kcat is 8.81x10(-3) min(-1) with phloroacetophenone as substrate (with acetyl-CoA as cosubstrate) (PubMed:27729920). kcat is 0.405 min(-1) with 4-hydroxy-6-propyl-2-pyrone as substrate (with butyryl-CoA as cosubstrate) (PubMed:27729920). kcat is 0.289 min(-1) with 4-hydroxy-6-pentyl-2-pyrone as substrate (with hexanoyl-CoA as cosubstrate) (PubMed:27729920).</text>
    </kinetics>
</comment>
<comment type="pathway">
    <text evidence="2">Secondary metabolite biosynthesis; terpenoid biosynthesis.</text>
</comment>
<comment type="subunit">
    <text evidence="2">Homodimer.</text>
</comment>
<comment type="tissue specificity">
    <text evidence="2">Mainly expressed in young leaves, and barely in mature leaves and twigs.</text>
</comment>
<comment type="similarity">
    <text evidence="4">Belongs to the thiolase-like superfamily. Chalcone/stilbene synthases family.</text>
</comment>
<name>ORS_RHODA</name>
<gene>
    <name evidence="3" type="primary">ORS</name>
</gene>
<organism>
    <name type="scientific">Rhododendron dauricum</name>
    <name type="common">Azalea daurica</name>
    <dbReference type="NCBI Taxonomy" id="880079"/>
    <lineage>
        <taxon>Eukaryota</taxon>
        <taxon>Viridiplantae</taxon>
        <taxon>Streptophyta</taxon>
        <taxon>Embryophyta</taxon>
        <taxon>Tracheophyta</taxon>
        <taxon>Spermatophyta</taxon>
        <taxon>Magnoliopsida</taxon>
        <taxon>eudicotyledons</taxon>
        <taxon>Gunneridae</taxon>
        <taxon>Pentapetalae</taxon>
        <taxon>asterids</taxon>
        <taxon>Ericales</taxon>
        <taxon>Ericaceae</taxon>
        <taxon>Ericoideae</taxon>
        <taxon>Rhodoreae</taxon>
        <taxon>Rhododendron</taxon>
    </lineage>
</organism>
<feature type="chain" id="PRO_0000458988" description="Orcinol synthase">
    <location>
        <begin position="1"/>
        <end position="412"/>
    </location>
</feature>
<feature type="active site" evidence="1 3">
    <location>
        <position position="164"/>
    </location>
</feature>
<feature type="active site" evidence="3">
    <location>
        <position position="322"/>
    </location>
</feature>
<feature type="active site" evidence="3">
    <location>
        <position position="355"/>
    </location>
</feature>